<reference key="1">
    <citation type="journal article" date="1998" name="Nature">
        <title>Deciphering the biology of Mycobacterium tuberculosis from the complete genome sequence.</title>
        <authorList>
            <person name="Cole S.T."/>
            <person name="Brosch R."/>
            <person name="Parkhill J."/>
            <person name="Garnier T."/>
            <person name="Churcher C.M."/>
            <person name="Harris D.E."/>
            <person name="Gordon S.V."/>
            <person name="Eiglmeier K."/>
            <person name="Gas S."/>
            <person name="Barry C.E. III"/>
            <person name="Tekaia F."/>
            <person name="Badcock K."/>
            <person name="Basham D."/>
            <person name="Brown D."/>
            <person name="Chillingworth T."/>
            <person name="Connor R."/>
            <person name="Davies R.M."/>
            <person name="Devlin K."/>
            <person name="Feltwell T."/>
            <person name="Gentles S."/>
            <person name="Hamlin N."/>
            <person name="Holroyd S."/>
            <person name="Hornsby T."/>
            <person name="Jagels K."/>
            <person name="Krogh A."/>
            <person name="McLean J."/>
            <person name="Moule S."/>
            <person name="Murphy L.D."/>
            <person name="Oliver S."/>
            <person name="Osborne J."/>
            <person name="Quail M.A."/>
            <person name="Rajandream M.A."/>
            <person name="Rogers J."/>
            <person name="Rutter S."/>
            <person name="Seeger K."/>
            <person name="Skelton S."/>
            <person name="Squares S."/>
            <person name="Squares R."/>
            <person name="Sulston J.E."/>
            <person name="Taylor K."/>
            <person name="Whitehead S."/>
            <person name="Barrell B.G."/>
        </authorList>
    </citation>
    <scope>NUCLEOTIDE SEQUENCE [LARGE SCALE GENOMIC DNA]</scope>
    <source>
        <strain>ATCC 25618 / H37Rv</strain>
    </source>
</reference>
<reference key="2">
    <citation type="journal article" date="2011" name="Mol. Cell. Proteomics">
        <title>Proteogenomic analysis of Mycobacterium tuberculosis by high resolution mass spectrometry.</title>
        <authorList>
            <person name="Kelkar D.S."/>
            <person name="Kumar D."/>
            <person name="Kumar P."/>
            <person name="Balakrishnan L."/>
            <person name="Muthusamy B."/>
            <person name="Yadav A.K."/>
            <person name="Shrivastava P."/>
            <person name="Marimuthu A."/>
            <person name="Anand S."/>
            <person name="Sundaram H."/>
            <person name="Kingsbury R."/>
            <person name="Harsha H.C."/>
            <person name="Nair B."/>
            <person name="Prasad T.S."/>
            <person name="Chauhan D.S."/>
            <person name="Katoch K."/>
            <person name="Katoch V.M."/>
            <person name="Kumar P."/>
            <person name="Chaerkady R."/>
            <person name="Ramachandran S."/>
            <person name="Dash D."/>
            <person name="Pandey A."/>
        </authorList>
    </citation>
    <scope>IDENTIFICATION BY MASS SPECTROMETRY [LARGE SCALE ANALYSIS]</scope>
    <source>
        <strain>ATCC 25618 / H37Rv</strain>
    </source>
</reference>
<reference key="3">
    <citation type="journal article" date="2012" name="J. Bacteriol.">
        <title>Mycobacterium tuberculosis CwsA interacts with CrgA and Wag31, and the CrgA-CwsA complex is involved in peptidoglycan synthesis and cell shape determination.</title>
        <authorList>
            <person name="Plocinski P."/>
            <person name="Arora N."/>
            <person name="Sarva K."/>
            <person name="Blaszczyk E."/>
            <person name="Qin H."/>
            <person name="Das N."/>
            <person name="Plocinska R."/>
            <person name="Ziolkiewicz M."/>
            <person name="Dziadek J."/>
            <person name="Kiran M."/>
            <person name="Gorla P."/>
            <person name="Cross T.A."/>
            <person name="Madiraju M."/>
            <person name="Rajagopalan M."/>
        </authorList>
    </citation>
    <scope>FUNCTION</scope>
    <scope>INTERACTION WITH CRGA AND WAG31</scope>
    <scope>SUBCELLULAR LOCATION</scope>
    <scope>GENE NAME</scope>
    <source>
        <strain>ATCC 25618 / H37Rv</strain>
    </source>
</reference>
<accession>P9WJF3</accession>
<accession>L0T2A0</accession>
<accession>P71577</accession>
<protein>
    <recommendedName>
        <fullName evidence="1">Cell wall synthesis protein CwsA</fullName>
    </recommendedName>
    <alternativeName>
        <fullName evidence="1">Cell wall synthesis and cell shape protein A</fullName>
    </alternativeName>
</protein>
<keyword id="KW-0131">Cell cycle</keyword>
<keyword id="KW-0132">Cell division</keyword>
<keyword id="KW-1003">Cell membrane</keyword>
<keyword id="KW-0133">Cell shape</keyword>
<keyword id="KW-0472">Membrane</keyword>
<keyword id="KW-1185">Reference proteome</keyword>
<keyword id="KW-0812">Transmembrane</keyword>
<keyword id="KW-1133">Transmembrane helix</keyword>
<feature type="chain" id="PRO_0000103640" description="Cell wall synthesis protein CwsA">
    <location>
        <begin position="1"/>
        <end position="145"/>
    </location>
</feature>
<feature type="transmembrane region" description="Helical" evidence="1">
    <location>
        <begin position="104"/>
        <end position="124"/>
    </location>
</feature>
<proteinExistence type="evidence at protein level"/>
<evidence type="ECO:0000255" key="1">
    <source>
        <dbReference type="HAMAP-Rule" id="MF_00927"/>
    </source>
</evidence>
<evidence type="ECO:0000269" key="2">
    <source>
    </source>
</evidence>
<evidence type="ECO:0000305" key="3">
    <source>
    </source>
</evidence>
<gene>
    <name evidence="1" type="primary">cwsA</name>
    <name type="ordered locus">Rv0008c</name>
    <name type="ORF">MTCY10H4.07c</name>
</gene>
<comment type="function">
    <text evidence="1 2">Required for regulated cell division, cell wall synthesis and the maintenance of cell shape.</text>
</comment>
<comment type="subunit">
    <text evidence="2">Interacts with CrgA and Wag31.</text>
</comment>
<comment type="interaction">
    <interactant intactId="EBI-6420113">
        <id>P9WJF3</id>
    </interactant>
    <interactant intactId="EBI-6414478">
        <id>P9WP57</id>
        <label>crgA</label>
    </interactant>
    <organismsDiffer>false</organismsDiffer>
    <experiments>3</experiments>
</comment>
<comment type="subcellular location">
    <subcellularLocation>
        <location evidence="3">Cell membrane</location>
        <topology evidence="3">Single-pass membrane protein</topology>
    </subcellularLocation>
    <text>Localizes to poles and midcell sites.</text>
</comment>
<comment type="similarity">
    <text evidence="1">Belongs to the CwsA family.</text>
</comment>
<organism>
    <name type="scientific">Mycobacterium tuberculosis (strain ATCC 25618 / H37Rv)</name>
    <dbReference type="NCBI Taxonomy" id="83332"/>
    <lineage>
        <taxon>Bacteria</taxon>
        <taxon>Bacillati</taxon>
        <taxon>Actinomycetota</taxon>
        <taxon>Actinomycetes</taxon>
        <taxon>Mycobacteriales</taxon>
        <taxon>Mycobacteriaceae</taxon>
        <taxon>Mycobacterium</taxon>
        <taxon>Mycobacterium tuberculosis complex</taxon>
    </lineage>
</organism>
<name>CWSA_MYCTU</name>
<dbReference type="EMBL" id="AL123456">
    <property type="protein sequence ID" value="CCP42730.1"/>
    <property type="molecule type" value="Genomic_DNA"/>
</dbReference>
<dbReference type="PIR" id="F70698">
    <property type="entry name" value="F70698"/>
</dbReference>
<dbReference type="RefSeq" id="NP_214522.1">
    <property type="nucleotide sequence ID" value="NC_000962.3"/>
</dbReference>
<dbReference type="RefSeq" id="WP_003917266.1">
    <property type="nucleotide sequence ID" value="NZ_NVQJ01000005.1"/>
</dbReference>
<dbReference type="BMRB" id="P9WJF3"/>
<dbReference type="SMR" id="P9WJF3"/>
<dbReference type="IntAct" id="P9WJF3">
    <property type="interactions" value="2"/>
</dbReference>
<dbReference type="STRING" id="83332.Rv0008c"/>
<dbReference type="PaxDb" id="83332-Rv0008c"/>
<dbReference type="DNASU" id="887085"/>
<dbReference type="GeneID" id="887085"/>
<dbReference type="KEGG" id="mtu:Rv0008c"/>
<dbReference type="KEGG" id="mtv:RVBD_0008c"/>
<dbReference type="TubercuList" id="Rv0008c"/>
<dbReference type="eggNOG" id="ENOG5030K8D">
    <property type="taxonomic scope" value="Bacteria"/>
</dbReference>
<dbReference type="InParanoid" id="P9WJF3"/>
<dbReference type="OrthoDB" id="4762208at2"/>
<dbReference type="Proteomes" id="UP000001584">
    <property type="component" value="Chromosome"/>
</dbReference>
<dbReference type="GO" id="GO:0005886">
    <property type="term" value="C:plasma membrane"/>
    <property type="evidence" value="ECO:0007005"/>
    <property type="project" value="MTBBASE"/>
</dbReference>
<dbReference type="GO" id="GO:0051301">
    <property type="term" value="P:cell division"/>
    <property type="evidence" value="ECO:0007669"/>
    <property type="project" value="UniProtKB-UniRule"/>
</dbReference>
<dbReference type="GO" id="GO:0042546">
    <property type="term" value="P:cell wall biogenesis"/>
    <property type="evidence" value="ECO:0007669"/>
    <property type="project" value="UniProtKB-UniRule"/>
</dbReference>
<dbReference type="GO" id="GO:0008360">
    <property type="term" value="P:regulation of cell shape"/>
    <property type="evidence" value="ECO:0007669"/>
    <property type="project" value="UniProtKB-UniRule"/>
</dbReference>
<dbReference type="HAMAP" id="MF_00927">
    <property type="entry name" value="CwsA"/>
    <property type="match status" value="1"/>
</dbReference>
<dbReference type="InterPro" id="IPR024245">
    <property type="entry name" value="CwsA"/>
</dbReference>
<dbReference type="Pfam" id="PF10814">
    <property type="entry name" value="CwsA"/>
    <property type="match status" value="1"/>
</dbReference>
<sequence length="145" mass="15671">MSEQVETRLTPRERLTRGLAYSAVGPVDVTRGLLELGVGLGLQSARSTAAGLRRRYREGRLAREVAAAQETLAQELTAAQDVVANLPQALQDARTQRRSKHHLWIFAGIAAAILAGGAVAFSIVRRSSRPEPSPRPPSVEVQPRS</sequence>